<feature type="chain" id="PRO_0000239312" description="Mitochondrial Rho GTPase 1">
    <location>
        <begin position="1"/>
        <end position="631"/>
    </location>
</feature>
<feature type="topological domain" description="Cytoplasmic" evidence="4">
    <location>
        <begin position="1"/>
        <end position="605"/>
    </location>
</feature>
<feature type="transmembrane region" description="Helical; Anchor for type IV membrane protein" evidence="4">
    <location>
        <begin position="606"/>
        <end position="628"/>
    </location>
</feature>
<feature type="topological domain" description="Mitochondrial intermembrane" evidence="4">
    <location>
        <begin position="629"/>
        <end position="631"/>
    </location>
</feature>
<feature type="domain" description="Miro 1" evidence="6">
    <location>
        <begin position="15"/>
        <end position="181"/>
    </location>
</feature>
<feature type="domain" description="EF-hand 1" evidence="5">
    <location>
        <begin position="197"/>
        <end position="232"/>
    </location>
</feature>
<feature type="domain" description="EF-hand 2" evidence="5">
    <location>
        <begin position="317"/>
        <end position="352"/>
    </location>
</feature>
<feature type="domain" description="Miro 2" evidence="6">
    <location>
        <begin position="429"/>
        <end position="592"/>
    </location>
</feature>
<feature type="binding site" evidence="3">
    <location>
        <position position="27"/>
    </location>
    <ligand>
        <name>GTP</name>
        <dbReference type="ChEBI" id="CHEBI:37565"/>
        <label>1</label>
    </ligand>
</feature>
<feature type="binding site" evidence="3">
    <location>
        <position position="29"/>
    </location>
    <ligand>
        <name>GTP</name>
        <dbReference type="ChEBI" id="CHEBI:37565"/>
        <label>1</label>
    </ligand>
</feature>
<feature type="binding site" evidence="3">
    <location>
        <position position="30"/>
    </location>
    <ligand>
        <name>GTP</name>
        <dbReference type="ChEBI" id="CHEBI:37565"/>
        <label>1</label>
    </ligand>
</feature>
<feature type="binding site" evidence="3">
    <location>
        <position position="31"/>
    </location>
    <ligand>
        <name>GTP</name>
        <dbReference type="ChEBI" id="CHEBI:37565"/>
        <label>1</label>
    </ligand>
</feature>
<feature type="binding site" evidence="3">
    <location>
        <position position="31"/>
    </location>
    <ligand>
        <name>Mg(2+)</name>
        <dbReference type="ChEBI" id="CHEBI:18420"/>
        <label>1</label>
    </ligand>
</feature>
<feature type="binding site" evidence="3">
    <location>
        <position position="32"/>
    </location>
    <ligand>
        <name>GTP</name>
        <dbReference type="ChEBI" id="CHEBI:37565"/>
        <label>1</label>
    </ligand>
</feature>
<feature type="binding site" evidence="3">
    <location>
        <position position="48"/>
    </location>
    <ligand>
        <name>Mg(2+)</name>
        <dbReference type="ChEBI" id="CHEBI:18420"/>
        <label>1</label>
    </ligand>
</feature>
<feature type="binding site" evidence="3">
    <location>
        <position position="70"/>
    </location>
    <ligand>
        <name>Mg(2+)</name>
        <dbReference type="ChEBI" id="CHEBI:18420"/>
        <label>1</label>
    </ligand>
</feature>
<feature type="binding site" evidence="3">
    <location>
        <position position="72"/>
    </location>
    <ligand>
        <name>GTP</name>
        <dbReference type="ChEBI" id="CHEBI:37565"/>
        <label>1</label>
    </ligand>
</feature>
<feature type="binding site" evidence="3">
    <location>
        <position position="131"/>
    </location>
    <ligand>
        <name>GTP</name>
        <dbReference type="ChEBI" id="CHEBI:37565"/>
        <label>1</label>
    </ligand>
</feature>
<feature type="binding site" evidence="3">
    <location>
        <position position="132"/>
    </location>
    <ligand>
        <name>GTP</name>
        <dbReference type="ChEBI" id="CHEBI:37565"/>
        <label>1</label>
    </ligand>
</feature>
<feature type="binding site" evidence="3">
    <location>
        <position position="134"/>
    </location>
    <ligand>
        <name>GTP</name>
        <dbReference type="ChEBI" id="CHEBI:37565"/>
        <label>1</label>
    </ligand>
</feature>
<feature type="binding site" evidence="3">
    <location>
        <position position="162"/>
    </location>
    <ligand>
        <name>GTP</name>
        <dbReference type="ChEBI" id="CHEBI:37565"/>
        <label>1</label>
    </ligand>
</feature>
<feature type="binding site" evidence="3">
    <location>
        <position position="163"/>
    </location>
    <ligand>
        <name>GTP</name>
        <dbReference type="ChEBI" id="CHEBI:37565"/>
        <label>1</label>
    </ligand>
</feature>
<feature type="binding site" evidence="5">
    <location>
        <position position="210"/>
    </location>
    <ligand>
        <name>Ca(2+)</name>
        <dbReference type="ChEBI" id="CHEBI:29108"/>
        <label>1</label>
    </ligand>
</feature>
<feature type="binding site" evidence="5">
    <location>
        <position position="212"/>
    </location>
    <ligand>
        <name>Ca(2+)</name>
        <dbReference type="ChEBI" id="CHEBI:29108"/>
        <label>1</label>
    </ligand>
</feature>
<feature type="binding site" evidence="5">
    <location>
        <position position="214"/>
    </location>
    <ligand>
        <name>Ca(2+)</name>
        <dbReference type="ChEBI" id="CHEBI:29108"/>
        <label>1</label>
    </ligand>
</feature>
<feature type="binding site" evidence="5">
    <location>
        <position position="216"/>
    </location>
    <ligand>
        <name>Ca(2+)</name>
        <dbReference type="ChEBI" id="CHEBI:29108"/>
        <label>1</label>
    </ligand>
</feature>
<feature type="binding site" evidence="5">
    <location>
        <position position="221"/>
    </location>
    <ligand>
        <name>Ca(2+)</name>
        <dbReference type="ChEBI" id="CHEBI:29108"/>
        <label>1</label>
    </ligand>
</feature>
<feature type="binding site" evidence="3">
    <location>
        <position position="330"/>
    </location>
    <ligand>
        <name>Ca(2+)</name>
        <dbReference type="ChEBI" id="CHEBI:29108"/>
        <label>2</label>
    </ligand>
</feature>
<feature type="binding site" evidence="3">
    <location>
        <position position="332"/>
    </location>
    <ligand>
        <name>Ca(2+)</name>
        <dbReference type="ChEBI" id="CHEBI:29108"/>
        <label>2</label>
    </ligand>
</feature>
<feature type="binding site" evidence="3">
    <location>
        <position position="334"/>
    </location>
    <ligand>
        <name>Ca(2+)</name>
        <dbReference type="ChEBI" id="CHEBI:29108"/>
        <label>2</label>
    </ligand>
</feature>
<feature type="binding site" evidence="3">
    <location>
        <position position="336"/>
    </location>
    <ligand>
        <name>Ca(2+)</name>
        <dbReference type="ChEBI" id="CHEBI:29108"/>
        <label>2</label>
    </ligand>
</feature>
<feature type="binding site" evidence="3">
    <location>
        <position position="341"/>
    </location>
    <ligand>
        <name>Ca(2+)</name>
        <dbReference type="ChEBI" id="CHEBI:29108"/>
        <label>2</label>
    </ligand>
</feature>
<feature type="binding site" evidence="3">
    <location>
        <position position="441"/>
    </location>
    <ligand>
        <name>GTP</name>
        <dbReference type="ChEBI" id="CHEBI:37565"/>
        <label>2</label>
    </ligand>
</feature>
<feature type="binding site" evidence="3">
    <location>
        <position position="441"/>
    </location>
    <ligand>
        <name>Mg(2+)</name>
        <dbReference type="ChEBI" id="CHEBI:18420"/>
        <label>2</label>
    </ligand>
</feature>
<feature type="binding site" evidence="3">
    <location>
        <position position="442"/>
    </location>
    <ligand>
        <name>GTP</name>
        <dbReference type="ChEBI" id="CHEBI:37565"/>
        <label>2</label>
    </ligand>
</feature>
<feature type="binding site" evidence="3">
    <location>
        <position position="443"/>
    </location>
    <ligand>
        <name>GTP</name>
        <dbReference type="ChEBI" id="CHEBI:37565"/>
        <label>2</label>
    </ligand>
</feature>
<feature type="binding site" evidence="3">
    <location>
        <position position="444"/>
    </location>
    <ligand>
        <name>GTP</name>
        <dbReference type="ChEBI" id="CHEBI:37565"/>
        <label>2</label>
    </ligand>
</feature>
<feature type="binding site" evidence="3">
    <location>
        <position position="445"/>
    </location>
    <ligand>
        <name>GTP</name>
        <dbReference type="ChEBI" id="CHEBI:37565"/>
        <label>2</label>
    </ligand>
</feature>
<feature type="binding site" evidence="3">
    <location>
        <position position="446"/>
    </location>
    <ligand>
        <name>GTP</name>
        <dbReference type="ChEBI" id="CHEBI:37565"/>
        <label>2</label>
    </ligand>
</feature>
<feature type="binding site" evidence="3">
    <location>
        <position position="460"/>
    </location>
    <ligand>
        <name>GTP</name>
        <dbReference type="ChEBI" id="CHEBI:37565"/>
        <label>2</label>
    </ligand>
</feature>
<feature type="binding site" evidence="3">
    <location>
        <position position="541"/>
    </location>
    <ligand>
        <name>GTP</name>
        <dbReference type="ChEBI" id="CHEBI:37565"/>
        <label>2</label>
    </ligand>
</feature>
<feature type="binding site" evidence="3">
    <location>
        <position position="543"/>
    </location>
    <ligand>
        <name>GTP</name>
        <dbReference type="ChEBI" id="CHEBI:37565"/>
        <label>2</label>
    </ligand>
</feature>
<feature type="binding site" evidence="3">
    <location>
        <position position="571"/>
    </location>
    <ligand>
        <name>GTP</name>
        <dbReference type="ChEBI" id="CHEBI:37565"/>
        <label>2</label>
    </ligand>
</feature>
<feature type="binding site" evidence="3">
    <location>
        <position position="572"/>
    </location>
    <ligand>
        <name>GTP</name>
        <dbReference type="ChEBI" id="CHEBI:37565"/>
        <label>2</label>
    </ligand>
</feature>
<feature type="modified residue" description="N6-acetyllysine" evidence="1">
    <location>
        <position position="105"/>
    </location>
</feature>
<feature type="cross-link" description="Glycyl lysine isopeptide (Lys-Gly) (interchain with G-Cter in ubiquitin)" evidence="3">
    <location>
        <position position="166"/>
    </location>
</feature>
<feature type="cross-link" description="Glycyl lysine isopeptide (Lys-Gly) (interchain with G-Cter in ubiquitin)" evidence="3">
    <location>
        <position position="248"/>
    </location>
</feature>
<feature type="cross-link" description="Glycyl lysine isopeptide (Lys-Gly) (interchain with G-Cter in ubiquitin)" evidence="3">
    <location>
        <position position="585"/>
    </location>
</feature>
<comment type="function">
    <text evidence="3">Atypical mitochondrial nucleoside-triphosphatase (NTPase) involved in mitochondrial trafficking. Probably involved in control of anterograde transport of mitochondria and their subcellular distribution. Promotes mitochondrial fission during high calcium conditions. Can hydrolyze GTP, ATP and UTP (By similarity).</text>
</comment>
<comment type="catalytic activity">
    <reaction evidence="3">
        <text>GTP + H2O = GDP + phosphate + H(+)</text>
        <dbReference type="Rhea" id="RHEA:19669"/>
        <dbReference type="ChEBI" id="CHEBI:15377"/>
        <dbReference type="ChEBI" id="CHEBI:15378"/>
        <dbReference type="ChEBI" id="CHEBI:37565"/>
        <dbReference type="ChEBI" id="CHEBI:43474"/>
        <dbReference type="ChEBI" id="CHEBI:58189"/>
    </reaction>
    <physiologicalReaction direction="left-to-right" evidence="3">
        <dbReference type="Rhea" id="RHEA:19670"/>
    </physiologicalReaction>
</comment>
<comment type="catalytic activity">
    <reaction evidence="3">
        <text>ATP + H2O = ADP + phosphate + H(+)</text>
        <dbReference type="Rhea" id="RHEA:13065"/>
        <dbReference type="ChEBI" id="CHEBI:15377"/>
        <dbReference type="ChEBI" id="CHEBI:15378"/>
        <dbReference type="ChEBI" id="CHEBI:30616"/>
        <dbReference type="ChEBI" id="CHEBI:43474"/>
        <dbReference type="ChEBI" id="CHEBI:456216"/>
    </reaction>
    <physiologicalReaction direction="left-to-right" evidence="3">
        <dbReference type="Rhea" id="RHEA:13066"/>
    </physiologicalReaction>
</comment>
<comment type="catalytic activity">
    <reaction evidence="3">
        <text>UTP + H2O = UDP + phosphate + H(+)</text>
        <dbReference type="Rhea" id="RHEA:64900"/>
        <dbReference type="ChEBI" id="CHEBI:15377"/>
        <dbReference type="ChEBI" id="CHEBI:15378"/>
        <dbReference type="ChEBI" id="CHEBI:43474"/>
        <dbReference type="ChEBI" id="CHEBI:46398"/>
        <dbReference type="ChEBI" id="CHEBI:58223"/>
    </reaction>
    <physiologicalReaction direction="left-to-right" evidence="3">
        <dbReference type="Rhea" id="RHEA:64901"/>
    </physiologicalReaction>
</comment>
<comment type="subunit">
    <text evidence="2 3">Homodimer. Interacts with the kinesin-binding proteins TRAK1/OIP106 and TRAK2/GRIF1, forming a link between mitochondria and the trafficking apparatus of the microtubules (By similarity). Interacts with RAP1GDS1 (By similarity). Interacts with ARMCX1 (By similarity). Found in a complex with KIF5B, OGT, RHOT2 and TRAK1 (By similarity).</text>
</comment>
<comment type="subcellular location">
    <subcellularLocation>
        <location evidence="3">Mitochondrion outer membrane</location>
        <topology evidence="3">Single-pass type IV membrane protein</topology>
    </subcellularLocation>
    <text evidence="3">Colocalizes with MGARP and RHOT2 at the mitochondria.</text>
</comment>
<comment type="domain">
    <text evidence="3">The Miro 2 domain is necessary for efficient ubiquitination by PRKN.</text>
</comment>
<comment type="PTM">
    <text evidence="3">Ubiquitinated by PRKN during mitophagy, leading to its degradation and enhancement of mitophagy. Deubiquitinated by USP30 (By similarity).</text>
</comment>
<comment type="PTM">
    <text evidence="1">Acetylation on Lys-105 decreases sensitivity of mitochondrial transport to elevated Ca(2+) levels, increases mitochondrial transport and promotes axon growth. Deacetylated by HDAC6 which blocks mitochondrial transport and mediates axon growth inhibition.</text>
</comment>
<comment type="similarity">
    <text evidence="6 7">Belongs to the mitochondrial Rho GTPase family.</text>
</comment>
<protein>
    <recommendedName>
        <fullName>Mitochondrial Rho GTPase 1</fullName>
        <shortName>MIRO-1</shortName>
        <ecNumber evidence="3">3.6.5.-</ecNumber>
    </recommendedName>
    <alternativeName>
        <fullName>Ras homolog gene family member T1</fullName>
    </alternativeName>
</protein>
<name>MIRO1_BOVIN</name>
<evidence type="ECO:0000250" key="1">
    <source>
        <dbReference type="UniProtKB" id="A1L1L6"/>
    </source>
</evidence>
<evidence type="ECO:0000250" key="2">
    <source>
        <dbReference type="UniProtKB" id="Q8BG51"/>
    </source>
</evidence>
<evidence type="ECO:0000250" key="3">
    <source>
        <dbReference type="UniProtKB" id="Q8IXI2"/>
    </source>
</evidence>
<evidence type="ECO:0000255" key="4"/>
<evidence type="ECO:0000255" key="5">
    <source>
        <dbReference type="PROSITE-ProRule" id="PRU00448"/>
    </source>
</evidence>
<evidence type="ECO:0000255" key="6">
    <source>
        <dbReference type="PROSITE-ProRule" id="PRU00757"/>
    </source>
</evidence>
<evidence type="ECO:0000305" key="7"/>
<accession>Q2HJF8</accession>
<dbReference type="EC" id="3.6.5.-" evidence="3"/>
<dbReference type="EMBL" id="BC105456">
    <property type="protein sequence ID" value="AAI05457.1"/>
    <property type="molecule type" value="mRNA"/>
</dbReference>
<dbReference type="RefSeq" id="NP_001039547.1">
    <property type="nucleotide sequence ID" value="NM_001046082.1"/>
</dbReference>
<dbReference type="SMR" id="Q2HJF8"/>
<dbReference type="FunCoup" id="Q2HJF8">
    <property type="interactions" value="3648"/>
</dbReference>
<dbReference type="STRING" id="9913.ENSBTAP00000068711"/>
<dbReference type="PaxDb" id="9913-ENSBTAP00000035196"/>
<dbReference type="Ensembl" id="ENSBTAT00000035318.5">
    <property type="protein sequence ID" value="ENSBTAP00000035196.5"/>
    <property type="gene ID" value="ENSBTAG00000010001.7"/>
</dbReference>
<dbReference type="GeneID" id="511257"/>
<dbReference type="KEGG" id="bta:511257"/>
<dbReference type="CTD" id="55288"/>
<dbReference type="VEuPathDB" id="HostDB:ENSBTAG00000010001"/>
<dbReference type="VGNC" id="VGNC:33953">
    <property type="gene designation" value="RHOT1"/>
</dbReference>
<dbReference type="eggNOG" id="KOG1707">
    <property type="taxonomic scope" value="Eukaryota"/>
</dbReference>
<dbReference type="GeneTree" id="ENSGT00940000155641"/>
<dbReference type="InParanoid" id="Q2HJF8"/>
<dbReference type="OrthoDB" id="10020961at2759"/>
<dbReference type="Reactome" id="R-BTA-5689880">
    <property type="pathway name" value="Ub-specific processing proteases"/>
</dbReference>
<dbReference type="Reactome" id="R-BTA-9013425">
    <property type="pathway name" value="RHOT1 GTPase cycle"/>
</dbReference>
<dbReference type="Proteomes" id="UP000009136">
    <property type="component" value="Chromosome 19"/>
</dbReference>
<dbReference type="Bgee" id="ENSBTAG00000010001">
    <property type="expression patterns" value="Expressed in cardiac ventricle and 107 other cell types or tissues"/>
</dbReference>
<dbReference type="GO" id="GO:0005741">
    <property type="term" value="C:mitochondrial outer membrane"/>
    <property type="evidence" value="ECO:0000250"/>
    <property type="project" value="UniProtKB"/>
</dbReference>
<dbReference type="GO" id="GO:0005509">
    <property type="term" value="F:calcium ion binding"/>
    <property type="evidence" value="ECO:0007669"/>
    <property type="project" value="InterPro"/>
</dbReference>
<dbReference type="GO" id="GO:0005525">
    <property type="term" value="F:GTP binding"/>
    <property type="evidence" value="ECO:0000318"/>
    <property type="project" value="GO_Central"/>
</dbReference>
<dbReference type="GO" id="GO:0003924">
    <property type="term" value="F:GTPase activity"/>
    <property type="evidence" value="ECO:0000318"/>
    <property type="project" value="GO_Central"/>
</dbReference>
<dbReference type="GO" id="GO:0019725">
    <property type="term" value="P:cellular homeostasis"/>
    <property type="evidence" value="ECO:0000250"/>
    <property type="project" value="UniProtKB"/>
</dbReference>
<dbReference type="GO" id="GO:0097345">
    <property type="term" value="P:mitochondrial outer membrane permeabilization"/>
    <property type="evidence" value="ECO:0000250"/>
    <property type="project" value="UniProtKB"/>
</dbReference>
<dbReference type="GO" id="GO:0007005">
    <property type="term" value="P:mitochondrion organization"/>
    <property type="evidence" value="ECO:0000318"/>
    <property type="project" value="GO_Central"/>
</dbReference>
<dbReference type="GO" id="GO:0047497">
    <property type="term" value="P:mitochondrion transport along microtubule"/>
    <property type="evidence" value="ECO:0000250"/>
    <property type="project" value="UniProtKB"/>
</dbReference>
<dbReference type="CDD" id="cd01893">
    <property type="entry name" value="Miro1"/>
    <property type="match status" value="1"/>
</dbReference>
<dbReference type="CDD" id="cd01892">
    <property type="entry name" value="Miro2"/>
    <property type="match status" value="1"/>
</dbReference>
<dbReference type="FunFam" id="1.10.238.10:FF:000011">
    <property type="entry name" value="Mitochondrial Rho GTPase"/>
    <property type="match status" value="1"/>
</dbReference>
<dbReference type="FunFam" id="1.10.238.10:FF:000021">
    <property type="entry name" value="Mitochondrial Rho GTPase"/>
    <property type="match status" value="1"/>
</dbReference>
<dbReference type="FunFam" id="3.40.50.300:FF:000170">
    <property type="entry name" value="Mitochondrial Rho GTPase"/>
    <property type="match status" value="1"/>
</dbReference>
<dbReference type="FunFam" id="3.40.50.300:FF:000248">
    <property type="entry name" value="Mitochondrial Rho GTPase"/>
    <property type="match status" value="1"/>
</dbReference>
<dbReference type="Gene3D" id="1.10.238.10">
    <property type="entry name" value="EF-hand"/>
    <property type="match status" value="2"/>
</dbReference>
<dbReference type="Gene3D" id="3.40.50.300">
    <property type="entry name" value="P-loop containing nucleotide triphosphate hydrolases"/>
    <property type="match status" value="2"/>
</dbReference>
<dbReference type="InterPro" id="IPR011992">
    <property type="entry name" value="EF-hand-dom_pair"/>
</dbReference>
<dbReference type="InterPro" id="IPR018247">
    <property type="entry name" value="EF_Hand_1_Ca_BS"/>
</dbReference>
<dbReference type="InterPro" id="IPR013566">
    <property type="entry name" value="EF_hand_assoc_1"/>
</dbReference>
<dbReference type="InterPro" id="IPR013567">
    <property type="entry name" value="EF_hand_assoc_2"/>
</dbReference>
<dbReference type="InterPro" id="IPR002048">
    <property type="entry name" value="EF_hand_dom"/>
</dbReference>
<dbReference type="InterPro" id="IPR021181">
    <property type="entry name" value="Miro"/>
</dbReference>
<dbReference type="InterPro" id="IPR052266">
    <property type="entry name" value="Miro-EF-hand_domain"/>
</dbReference>
<dbReference type="InterPro" id="IPR020860">
    <property type="entry name" value="MIRO_dom"/>
</dbReference>
<dbReference type="InterPro" id="IPR027417">
    <property type="entry name" value="P-loop_NTPase"/>
</dbReference>
<dbReference type="InterPro" id="IPR005225">
    <property type="entry name" value="Small_GTP-bd"/>
</dbReference>
<dbReference type="InterPro" id="IPR001806">
    <property type="entry name" value="Small_GTPase"/>
</dbReference>
<dbReference type="NCBIfam" id="TIGR00231">
    <property type="entry name" value="small_GTP"/>
    <property type="match status" value="1"/>
</dbReference>
<dbReference type="PANTHER" id="PTHR46819">
    <property type="entry name" value="EF-HAND CALCIUM-BINDING DOMAIN-CONTAINING PROTEIN 7"/>
    <property type="match status" value="1"/>
</dbReference>
<dbReference type="PANTHER" id="PTHR46819:SF1">
    <property type="entry name" value="EF-HAND CALCIUM-BINDING DOMAIN-CONTAINING PROTEIN 7"/>
    <property type="match status" value="1"/>
</dbReference>
<dbReference type="Pfam" id="PF08355">
    <property type="entry name" value="EF_assoc_1"/>
    <property type="match status" value="1"/>
</dbReference>
<dbReference type="Pfam" id="PF08356">
    <property type="entry name" value="EF_assoc_2"/>
    <property type="match status" value="1"/>
</dbReference>
<dbReference type="Pfam" id="PF00071">
    <property type="entry name" value="Ras"/>
    <property type="match status" value="1"/>
</dbReference>
<dbReference type="PIRSF" id="PIRSF037488">
    <property type="entry name" value="Mt_Rho_GTPase"/>
    <property type="match status" value="1"/>
</dbReference>
<dbReference type="PRINTS" id="PR00449">
    <property type="entry name" value="RASTRNSFRMNG"/>
</dbReference>
<dbReference type="SMART" id="SM00054">
    <property type="entry name" value="EFh"/>
    <property type="match status" value="2"/>
</dbReference>
<dbReference type="SMART" id="SM00175">
    <property type="entry name" value="RAB"/>
    <property type="match status" value="1"/>
</dbReference>
<dbReference type="SMART" id="SM00173">
    <property type="entry name" value="RAS"/>
    <property type="match status" value="1"/>
</dbReference>
<dbReference type="SMART" id="SM00174">
    <property type="entry name" value="RHO"/>
    <property type="match status" value="1"/>
</dbReference>
<dbReference type="SUPFAM" id="SSF47473">
    <property type="entry name" value="EF-hand"/>
    <property type="match status" value="1"/>
</dbReference>
<dbReference type="SUPFAM" id="SSF52540">
    <property type="entry name" value="P-loop containing nucleoside triphosphate hydrolases"/>
    <property type="match status" value="2"/>
</dbReference>
<dbReference type="PROSITE" id="PS00018">
    <property type="entry name" value="EF_HAND_1"/>
    <property type="match status" value="1"/>
</dbReference>
<dbReference type="PROSITE" id="PS50222">
    <property type="entry name" value="EF_HAND_2"/>
    <property type="match status" value="2"/>
</dbReference>
<dbReference type="PROSITE" id="PS51423">
    <property type="entry name" value="MIRO"/>
    <property type="match status" value="2"/>
</dbReference>
<keyword id="KW-0007">Acetylation</keyword>
<keyword id="KW-0106">Calcium</keyword>
<keyword id="KW-0342">GTP-binding</keyword>
<keyword id="KW-0378">Hydrolase</keyword>
<keyword id="KW-1017">Isopeptide bond</keyword>
<keyword id="KW-0460">Magnesium</keyword>
<keyword id="KW-0472">Membrane</keyword>
<keyword id="KW-0479">Metal-binding</keyword>
<keyword id="KW-0496">Mitochondrion</keyword>
<keyword id="KW-1000">Mitochondrion outer membrane</keyword>
<keyword id="KW-0547">Nucleotide-binding</keyword>
<keyword id="KW-1185">Reference proteome</keyword>
<keyword id="KW-0677">Repeat</keyword>
<keyword id="KW-0812">Transmembrane</keyword>
<keyword id="KW-1133">Transmembrane helix</keyword>
<keyword id="KW-0832">Ubl conjugation</keyword>
<sequence length="631" mass="72078">MPAGRGRPLRAADMKKDVRILLVGEPRVGKTSLIMSLVSEEFPEEVPPRAEEITIPADVTPERVPTHIVDYSEAEQSDEQLHQEISQANVICIVYAVNNKHSIDKVTSRWIPLINERTDKDSRLPLILVGNKSDLVEYSSMETILPIMNQYTEIETCVECSAKNLKNISELFYYAQKAVLHPTGPLYCPEEKEMKPACIKALTRIFKISDQDNDGTLNDAELNFFQRICFNTPLAPQALEDVKNVVRKHISDGVADGGLTLKGFLFLHTLFIQRGRHETTWTVLRRFGYDDDLDLTPEYLFPLLKIPPDCTTELNHHAYLFLQSTFDKHDLDRDCALSPDELKDLFKVFPYIPWGPDVNNTVCTNEKGWITYQGFLSQWTLTTYLDVQRCLEYLGYLGYSILTEQESQASAITVTRDKKIDLQKKQTQRNVFRCNVIGMKNCGKSGVLQALLGRNLTRQKKIRDDHKSYYAINTVYVYGQEKYLLLHDISESEFLTEAEILCDVVCLVYDVSNPKSFEYCARIFKQHFMDSRIPCLIVAAKSDLHEVKQEYSISPTDFCRKHKMPPPQAFTCNTADAPSKDIFVKLTTMAMYPHVTQADLKSSTFWLRASFGATVFAVLGFAMYKALLKQR</sequence>
<proteinExistence type="evidence at transcript level"/>
<organism>
    <name type="scientific">Bos taurus</name>
    <name type="common">Bovine</name>
    <dbReference type="NCBI Taxonomy" id="9913"/>
    <lineage>
        <taxon>Eukaryota</taxon>
        <taxon>Metazoa</taxon>
        <taxon>Chordata</taxon>
        <taxon>Craniata</taxon>
        <taxon>Vertebrata</taxon>
        <taxon>Euteleostomi</taxon>
        <taxon>Mammalia</taxon>
        <taxon>Eutheria</taxon>
        <taxon>Laurasiatheria</taxon>
        <taxon>Artiodactyla</taxon>
        <taxon>Ruminantia</taxon>
        <taxon>Pecora</taxon>
        <taxon>Bovidae</taxon>
        <taxon>Bovinae</taxon>
        <taxon>Bos</taxon>
    </lineage>
</organism>
<gene>
    <name type="primary">RHOT1</name>
    <name type="synonym">ARHT1</name>
</gene>
<reference key="1">
    <citation type="submission" date="2005-09" db="EMBL/GenBank/DDBJ databases">
        <authorList>
            <consortium name="NIH - Mammalian Gene Collection (MGC) project"/>
        </authorList>
    </citation>
    <scope>NUCLEOTIDE SEQUENCE [LARGE SCALE MRNA]</scope>
    <source>
        <strain>Hereford</strain>
        <tissue>Heart ventricle</tissue>
    </source>
</reference>